<evidence type="ECO:0000305" key="1"/>
<feature type="chain" id="PRO_0000263029" description="Protein YzgL">
    <location>
        <begin position="1"/>
        <end position="93"/>
    </location>
</feature>
<organism>
    <name type="scientific">Escherichia coli (strain K12)</name>
    <dbReference type="NCBI Taxonomy" id="83333"/>
    <lineage>
        <taxon>Bacteria</taxon>
        <taxon>Pseudomonadati</taxon>
        <taxon>Pseudomonadota</taxon>
        <taxon>Gammaproteobacteria</taxon>
        <taxon>Enterobacterales</taxon>
        <taxon>Enterobacteriaceae</taxon>
        <taxon>Escherichia</taxon>
    </lineage>
</organism>
<proteinExistence type="predicted"/>
<accession>P76692</accession>
<accession>A0A385XK09</accession>
<accession>Q2M791</accession>
<accession>Q79CZ1</accession>
<keyword id="KW-1185">Reference proteome</keyword>
<reference key="1">
    <citation type="journal article" date="1997" name="Science">
        <title>The complete genome sequence of Escherichia coli K-12.</title>
        <authorList>
            <person name="Blattner F.R."/>
            <person name="Plunkett G. III"/>
            <person name="Bloch C.A."/>
            <person name="Perna N.T."/>
            <person name="Burland V."/>
            <person name="Riley M."/>
            <person name="Collado-Vides J."/>
            <person name="Glasner J.D."/>
            <person name="Rode C.K."/>
            <person name="Mayhew G.F."/>
            <person name="Gregor J."/>
            <person name="Davis N.W."/>
            <person name="Kirkpatrick H.A."/>
            <person name="Goeden M.A."/>
            <person name="Rose D.J."/>
            <person name="Mau B."/>
            <person name="Shao Y."/>
        </authorList>
    </citation>
    <scope>NUCLEOTIDE SEQUENCE [LARGE SCALE GENOMIC DNA]</scope>
    <source>
        <strain>K12 / MG1655 / ATCC 47076</strain>
    </source>
</reference>
<reference key="2">
    <citation type="journal article" date="2006" name="Mol. Syst. Biol.">
        <title>Highly accurate genome sequences of Escherichia coli K-12 strains MG1655 and W3110.</title>
        <authorList>
            <person name="Hayashi K."/>
            <person name="Morooka N."/>
            <person name="Yamamoto Y."/>
            <person name="Fujita K."/>
            <person name="Isono K."/>
            <person name="Choi S."/>
            <person name="Ohtsubo E."/>
            <person name="Baba T."/>
            <person name="Wanner B.L."/>
            <person name="Mori H."/>
            <person name="Horiuchi T."/>
        </authorList>
    </citation>
    <scope>NUCLEOTIDE SEQUENCE [LARGE SCALE GENOMIC DNA]</scope>
    <source>
        <strain>K12 / W3110 / ATCC 27325 / DSM 5911</strain>
    </source>
</reference>
<comment type="miscellaneous">
    <text evidence="1">Missing up to 410 C-terminal residues compared to orthologs.</text>
</comment>
<comment type="sequence caution" evidence="1">
    <conflict type="erroneous initiation">
        <sequence resource="EMBL-CDS" id="AAA58225"/>
    </conflict>
    <text>Extended N-terminus.</text>
</comment>
<sequence length="93" mass="10129">MQNRKWILTSLVMTFFGIPILAQFLAVVIAMLGVGLAGIIEVCNILITPTIYLLLKIFMLALGALMLFFSGRVGNVPEFCYVGYDGVGFAVIP</sequence>
<protein>
    <recommendedName>
        <fullName>Protein YzgL</fullName>
    </recommendedName>
</protein>
<gene>
    <name type="primary">yzgL</name>
    <name type="ordered locus">b3427</name>
    <name type="ordered locus">JW3390</name>
</gene>
<name>YZGL_ECOLI</name>
<dbReference type="EMBL" id="U18997">
    <property type="protein sequence ID" value="AAA58225.1"/>
    <property type="status" value="ALT_INIT"/>
    <property type="molecule type" value="Genomic_DNA"/>
</dbReference>
<dbReference type="EMBL" id="U00096">
    <property type="protein sequence ID" value="AYC08247.1"/>
    <property type="molecule type" value="Genomic_DNA"/>
</dbReference>
<dbReference type="EMBL" id="AP009048">
    <property type="protein sequence ID" value="BAE77865.1"/>
    <property type="molecule type" value="Genomic_DNA"/>
</dbReference>
<dbReference type="PIR" id="F65138">
    <property type="entry name" value="Q4ECGG"/>
</dbReference>
<dbReference type="SMR" id="P76692"/>
<dbReference type="BioGRID" id="4261261">
    <property type="interactions" value="6"/>
</dbReference>
<dbReference type="FunCoup" id="P76692">
    <property type="interactions" value="6"/>
</dbReference>
<dbReference type="EnsemblBacteria" id="AYC08247">
    <property type="protein sequence ID" value="AYC08247"/>
    <property type="gene ID" value="b3427"/>
</dbReference>
<dbReference type="KEGG" id="ecj:JW3390"/>
<dbReference type="PATRIC" id="fig|1411691.4.peg.3302"/>
<dbReference type="eggNOG" id="COG0226">
    <property type="taxonomic scope" value="Bacteria"/>
</dbReference>
<dbReference type="HOGENOM" id="CLU_182901_0_0_6"/>
<dbReference type="InParanoid" id="P76692"/>
<dbReference type="BioCyc" id="EcoCyc:G7752-MONOMER"/>
<dbReference type="PRO" id="PR:P76692"/>
<dbReference type="Proteomes" id="UP000000625">
    <property type="component" value="Chromosome"/>
</dbReference>